<keyword id="KW-0012">Acyltransferase</keyword>
<keyword id="KW-0046">Antibiotic resistance</keyword>
<keyword id="KW-0614">Plasmid</keyword>
<keyword id="KW-0808">Transferase</keyword>
<reference key="1">
    <citation type="journal article" date="1990" name="Biochem. J.">
        <title>Nucleotide sequences of genes encoding the type II chloramphenicol acetyltransferases of Escherichia coli and Haemophilus influenzae, which are sensitive to inhibition by thiol-reactive reagents.</title>
        <authorList>
            <person name="Murray I.A."/>
            <person name="Martinez-Suarez J.V."/>
            <person name="Close T.J."/>
            <person name="Shaw W.V."/>
        </authorList>
    </citation>
    <scope>NUCLEOTIDE SEQUENCE [GENOMIC DNA]</scope>
</reference>
<geneLocation type="plasmid">
    <name>p85098</name>
</geneLocation>
<organism>
    <name type="scientific">Haemophilus influenzae</name>
    <dbReference type="NCBI Taxonomy" id="727"/>
    <lineage>
        <taxon>Bacteria</taxon>
        <taxon>Pseudomonadati</taxon>
        <taxon>Pseudomonadota</taxon>
        <taxon>Gammaproteobacteria</taxon>
        <taxon>Pasteurellales</taxon>
        <taxon>Pasteurellaceae</taxon>
        <taxon>Haemophilus</taxon>
    </lineage>
</organism>
<comment type="function">
    <text>This enzyme is an effector of chloramphenicol resistance in bacteria.</text>
</comment>
<comment type="catalytic activity">
    <reaction evidence="1">
        <text>chloramphenicol + acetyl-CoA = chloramphenicol 3-acetate + CoA</text>
        <dbReference type="Rhea" id="RHEA:18421"/>
        <dbReference type="ChEBI" id="CHEBI:16730"/>
        <dbReference type="ChEBI" id="CHEBI:17698"/>
        <dbReference type="ChEBI" id="CHEBI:57287"/>
        <dbReference type="ChEBI" id="CHEBI:57288"/>
        <dbReference type="EC" id="2.3.1.28"/>
    </reaction>
</comment>
<comment type="subunit">
    <text>Homotrimer.</text>
</comment>
<comment type="miscellaneous">
    <text>Type II chloramphenicol acetyltransferases are sensitive to inhibition by thiol-reactive reagents. The inactivation occurs as a result of chemical modification of Cys-26.</text>
</comment>
<comment type="similarity">
    <text evidence="2">Belongs to the chloramphenicol acetyltransferase family.</text>
</comment>
<feature type="chain" id="PRO_0000165876" description="Chloramphenicol acetyltransferase 2">
    <location>
        <begin position="1"/>
        <end position="213"/>
    </location>
</feature>
<feature type="active site" description="Proton acceptor" evidence="1">
    <location>
        <position position="189"/>
    </location>
</feature>
<name>CAT2_HAEIF</name>
<sequence>MNFTRIDLNTWNRREHFALYRQQIKCGFSLTTKLDITAFRTALAETDYKFYPVMIYLISRVVNQFPEFRMAMKDNALIYWDQTDPVFTVFHKETETFSALFCRYCPDISEFMAGYNAVMAEYQHNTALFPQGALPENHLNISSLPWVSFDGFNLNITGNDDYFAPVFTMAKFQQEDNRVLLPVSVQVHHAVCDGFHAARFINTLQMMCDNILK</sequence>
<gene>
    <name type="primary">cat-IIH</name>
</gene>
<evidence type="ECO:0000255" key="1">
    <source>
        <dbReference type="PROSITE-ProRule" id="PRU10021"/>
    </source>
</evidence>
<evidence type="ECO:0000305" key="2"/>
<dbReference type="EC" id="2.3.1.28"/>
<dbReference type="EMBL" id="X53797">
    <property type="protein sequence ID" value="CAA37806.1"/>
    <property type="molecule type" value="Genomic_DNA"/>
</dbReference>
<dbReference type="PIR" id="S13399">
    <property type="entry name" value="S13399"/>
</dbReference>
<dbReference type="RefSeq" id="WP_063843222.1">
    <property type="nucleotide sequence ID" value="NG_047593.1"/>
</dbReference>
<dbReference type="SMR" id="P22616"/>
<dbReference type="CARD" id="ARO:3002684">
    <property type="molecule name" value="catII"/>
    <property type="mechanism identifier" value="ARO:0001004"/>
    <property type="mechanism name" value="antibiotic inactivation"/>
</dbReference>
<dbReference type="GO" id="GO:0008811">
    <property type="term" value="F:chloramphenicol O-acetyltransferase activity"/>
    <property type="evidence" value="ECO:0007669"/>
    <property type="project" value="UniProtKB-EC"/>
</dbReference>
<dbReference type="GO" id="GO:0046677">
    <property type="term" value="P:response to antibiotic"/>
    <property type="evidence" value="ECO:0007669"/>
    <property type="project" value="UniProtKB-KW"/>
</dbReference>
<dbReference type="Gene3D" id="3.30.559.10">
    <property type="entry name" value="Chloramphenicol acetyltransferase-like domain"/>
    <property type="match status" value="1"/>
</dbReference>
<dbReference type="InterPro" id="IPR023213">
    <property type="entry name" value="CAT-like_dom_sf"/>
</dbReference>
<dbReference type="InterPro" id="IPR018372">
    <property type="entry name" value="Chloramphenicol_AcTrfase_AS"/>
</dbReference>
<dbReference type="InterPro" id="IPR001707">
    <property type="entry name" value="Cmp_AcTrfase"/>
</dbReference>
<dbReference type="NCBIfam" id="NF000491">
    <property type="entry name" value="chloram_CatA"/>
    <property type="match status" value="1"/>
</dbReference>
<dbReference type="PANTHER" id="PTHR38474:SF2">
    <property type="entry name" value="CHLORAMPHENICOL ACETYLTRANSFERASE"/>
    <property type="match status" value="1"/>
</dbReference>
<dbReference type="PANTHER" id="PTHR38474">
    <property type="entry name" value="SLR0299 PROTEIN"/>
    <property type="match status" value="1"/>
</dbReference>
<dbReference type="Pfam" id="PF00302">
    <property type="entry name" value="CAT"/>
    <property type="match status" value="1"/>
</dbReference>
<dbReference type="PIRSF" id="PIRSF000440">
    <property type="entry name" value="CAT"/>
    <property type="match status" value="1"/>
</dbReference>
<dbReference type="SMART" id="SM01059">
    <property type="entry name" value="CAT"/>
    <property type="match status" value="1"/>
</dbReference>
<dbReference type="SUPFAM" id="SSF52777">
    <property type="entry name" value="CoA-dependent acyltransferases"/>
    <property type="match status" value="1"/>
</dbReference>
<dbReference type="PROSITE" id="PS00100">
    <property type="entry name" value="CAT"/>
    <property type="match status" value="1"/>
</dbReference>
<protein>
    <recommendedName>
        <fullName>Chloramphenicol acetyltransferase 2</fullName>
        <ecNumber>2.3.1.28</ecNumber>
    </recommendedName>
    <alternativeName>
        <fullName>Chloramphenicol acetyltransferase II</fullName>
        <shortName>CAT-II</shortName>
    </alternativeName>
</protein>
<accession>P22616</accession>
<proteinExistence type="inferred from homology"/>